<proteinExistence type="evidence at transcript level"/>
<feature type="chain" id="PRO_0000331730" description="Homeobox-leucine zipper protein HOX29">
    <location>
        <begin position="1"/>
        <end position="868"/>
    </location>
</feature>
<feature type="domain" description="START" evidence="3">
    <location>
        <begin position="169"/>
        <end position="397"/>
    </location>
</feature>
<feature type="DNA-binding region" description="Homeobox" evidence="2">
    <location>
        <begin position="9"/>
        <end position="72"/>
    </location>
</feature>
<feature type="region of interest" description="Disordered" evidence="4">
    <location>
        <begin position="150"/>
        <end position="171"/>
    </location>
</feature>
<feature type="coiled-coil region" evidence="1">
    <location>
        <begin position="64"/>
        <end position="106"/>
    </location>
</feature>
<feature type="sequence conflict" description="In Ref. 6; AK112091." evidence="7" ref="6">
    <original>S</original>
    <variation>L</variation>
    <location>
        <position position="494"/>
    </location>
</feature>
<dbReference type="EMBL" id="AB374207">
    <property type="protein sequence ID" value="BAG31403.1"/>
    <property type="molecule type" value="mRNA"/>
</dbReference>
<dbReference type="EMBL" id="AP003197">
    <property type="protein sequence ID" value="BAD73204.1"/>
    <property type="status" value="ALT_SEQ"/>
    <property type="molecule type" value="Genomic_DNA"/>
</dbReference>
<dbReference type="EMBL" id="AP008207">
    <property type="protein sequence ID" value="BAF04229.2"/>
    <property type="status" value="ALT_SEQ"/>
    <property type="molecule type" value="Genomic_DNA"/>
</dbReference>
<dbReference type="EMBL" id="AP014957">
    <property type="status" value="NOT_ANNOTATED_CDS"/>
    <property type="molecule type" value="Genomic_DNA"/>
</dbReference>
<dbReference type="EMBL" id="AK112091">
    <property type="status" value="NOT_ANNOTATED_CDS"/>
    <property type="molecule type" value="mRNA"/>
</dbReference>
<dbReference type="EMBL" id="AY559050">
    <property type="protein sequence ID" value="AAS68141.1"/>
    <property type="molecule type" value="mRNA"/>
</dbReference>
<dbReference type="RefSeq" id="XP_015624690.1">
    <property type="nucleotide sequence ID" value="XM_015769204.1"/>
</dbReference>
<dbReference type="SMR" id="Q5QMZ9"/>
<dbReference type="FunCoup" id="Q5QMZ9">
    <property type="interactions" value="729"/>
</dbReference>
<dbReference type="STRING" id="39947.Q5QMZ9"/>
<dbReference type="PaxDb" id="39947-Q5QMZ9"/>
<dbReference type="KEGG" id="dosa:Os01g0200300"/>
<dbReference type="eggNOG" id="ENOG502QPKR">
    <property type="taxonomic scope" value="Eukaryota"/>
</dbReference>
<dbReference type="HOGENOM" id="CLU_040854_0_0_1"/>
<dbReference type="InParanoid" id="Q5QMZ9"/>
<dbReference type="OrthoDB" id="1867783at2759"/>
<dbReference type="Proteomes" id="UP000000763">
    <property type="component" value="Chromosome 1"/>
</dbReference>
<dbReference type="Proteomes" id="UP000059680">
    <property type="component" value="Chromosome 1"/>
</dbReference>
<dbReference type="GO" id="GO:0005634">
    <property type="term" value="C:nucleus"/>
    <property type="evidence" value="ECO:0007669"/>
    <property type="project" value="UniProtKB-SubCell"/>
</dbReference>
<dbReference type="GO" id="GO:0003677">
    <property type="term" value="F:DNA binding"/>
    <property type="evidence" value="ECO:0007669"/>
    <property type="project" value="UniProtKB-KW"/>
</dbReference>
<dbReference type="GO" id="GO:0003700">
    <property type="term" value="F:DNA-binding transcription factor activity"/>
    <property type="evidence" value="ECO:0007669"/>
    <property type="project" value="InterPro"/>
</dbReference>
<dbReference type="GO" id="GO:0008289">
    <property type="term" value="F:lipid binding"/>
    <property type="evidence" value="ECO:0007669"/>
    <property type="project" value="InterPro"/>
</dbReference>
<dbReference type="CDD" id="cd14686">
    <property type="entry name" value="bZIP"/>
    <property type="match status" value="1"/>
</dbReference>
<dbReference type="CDD" id="cd00086">
    <property type="entry name" value="homeodomain"/>
    <property type="match status" value="1"/>
</dbReference>
<dbReference type="CDD" id="cd08875">
    <property type="entry name" value="START_ArGLABRA2_like"/>
    <property type="match status" value="1"/>
</dbReference>
<dbReference type="Gene3D" id="3.30.530.20">
    <property type="match status" value="1"/>
</dbReference>
<dbReference type="Gene3D" id="1.10.10.60">
    <property type="entry name" value="Homeodomain-like"/>
    <property type="match status" value="1"/>
</dbReference>
<dbReference type="InterPro" id="IPR001356">
    <property type="entry name" value="HD"/>
</dbReference>
<dbReference type="InterPro" id="IPR044830">
    <property type="entry name" value="HD-Zip_III"/>
</dbReference>
<dbReference type="InterPro" id="IPR009057">
    <property type="entry name" value="Homeodomain-like_sf"/>
</dbReference>
<dbReference type="InterPro" id="IPR013978">
    <property type="entry name" value="MEKHLA"/>
</dbReference>
<dbReference type="InterPro" id="IPR023393">
    <property type="entry name" value="START-like_dom_sf"/>
</dbReference>
<dbReference type="InterPro" id="IPR002913">
    <property type="entry name" value="START_lipid-bd_dom"/>
</dbReference>
<dbReference type="PANTHER" id="PTHR45950">
    <property type="entry name" value="HOMEOBOX-LEUCINE ZIPPER PROTEIN ATHB-14"/>
    <property type="match status" value="1"/>
</dbReference>
<dbReference type="PANTHER" id="PTHR45950:SF1">
    <property type="entry name" value="HOMEOBOX-LEUCINE ZIPPER PROTEIN ATHB-15"/>
    <property type="match status" value="1"/>
</dbReference>
<dbReference type="Pfam" id="PF00046">
    <property type="entry name" value="Homeodomain"/>
    <property type="match status" value="1"/>
</dbReference>
<dbReference type="Pfam" id="PF08670">
    <property type="entry name" value="MEKHLA"/>
    <property type="match status" value="1"/>
</dbReference>
<dbReference type="Pfam" id="PF01852">
    <property type="entry name" value="START"/>
    <property type="match status" value="1"/>
</dbReference>
<dbReference type="SMART" id="SM00389">
    <property type="entry name" value="HOX"/>
    <property type="match status" value="1"/>
</dbReference>
<dbReference type="SMART" id="SM00234">
    <property type="entry name" value="START"/>
    <property type="match status" value="1"/>
</dbReference>
<dbReference type="SUPFAM" id="SSF55961">
    <property type="entry name" value="Bet v1-like"/>
    <property type="match status" value="1"/>
</dbReference>
<dbReference type="SUPFAM" id="SSF46689">
    <property type="entry name" value="Homeodomain-like"/>
    <property type="match status" value="1"/>
</dbReference>
<dbReference type="PROSITE" id="PS50071">
    <property type="entry name" value="HOMEOBOX_2"/>
    <property type="match status" value="1"/>
</dbReference>
<dbReference type="PROSITE" id="PS50848">
    <property type="entry name" value="START"/>
    <property type="match status" value="1"/>
</dbReference>
<name>HOX29_ORYSJ</name>
<sequence length="868" mass="93957">MVASAAAMDASKYVRYTPEQVEALERLYYECPKPSSLRRQQLVRECPALANVDPKQIKVWFQNRRCREKQRKESSRLQALNRKLTAMNKLLMEENDRLQKQVSQLVYDHGRHGVAAAGMMRRVPAFPPQAAAAAGHQLATATDTSCESVVTSGHHHQQQQHNVVQPPPRDASPAGLMSIAEETLTEFLSKATGTAVEWLQMPGMKPGPDSIGIIAISHGCAGVAARACGLVGMEPAKVAEILKDRPLWLRDCRSMDVVNVLPAGANGTIELLYMQLYAPTTLAPARDFWLLRYTSILDDGSLVVCERSLSSKQGGPSMPLVQPFIRGEMLPSGFLIRPSDVGGSVIHIVDHMDLEPWSVPEVVRPLYESSAMVAQKISMAALRYLRQVAHEDTRSVITGWGRQPAALRALSQKLTRGFNEALNGLADDGWSVIESDGVDDVCISVNSSKVIGCNATFSSGLPIVSTGVLCAKASMLLQDVSPPSLLQFLREHRSQWADSNLDAFFASTMKPNFCNLPMSRLGGFSGQVILPLAHTFEPEEFLEVIKLGNASNYQDTLVHRDLFLLQMYNGVEESSAGTCSELIFAPIDASFSDDSPLLPSGFRIIPIDSPLDTSSPNCTLDLASTLEAATPRSRISGVNGGGGGCAAAAASSSSKAVMTIAFQFAFDGHLQDSVAAMARQYMRNIISSVQRIAVALSSSRLVPPGAGAAAAQLSPVTPEAATLPRWICQSYRFHFGDELIKSVDANSSNESILKAVWHHPSAILCCSLKAMPVFTFANQSGLDMLETTLVALQDMTLEKVFDDQGRKNLCTELPNIMEQGMACMEGGVCVSSVGRAASYEKAVAWKVVDGDGGGAHCICFMFINWTFL</sequence>
<gene>
    <name type="primary">HOX29</name>
    <name type="ordered locus">Os01g0200300</name>
    <name type="ordered locus">LOC_Os01g10320</name>
    <name type="ORF">B1015E06.7</name>
</gene>
<accession>Q5QMZ9</accession>
<accession>B2DDE8</accession>
<accession>Q0JPU9</accession>
<accession>Q6Q4Z8</accession>
<reference key="1">
    <citation type="journal article" date="2008" name="Plant Physiol.">
        <title>Developmental role and auxin responsiveness of Class III homeodomain leucine zipper gene family members in rice.</title>
        <authorList>
            <person name="Itoh J."/>
            <person name="Hibara K."/>
            <person name="Sato Y."/>
            <person name="Nagato Y."/>
        </authorList>
    </citation>
    <scope>NUCLEOTIDE SEQUENCE [MRNA]</scope>
    <scope>FUNCTION</scope>
    <scope>TISSUE SPECIFICITY</scope>
    <source>
        <strain>cv. Taichung 65</strain>
        <tissue>Shoot</tissue>
    </source>
</reference>
<reference key="2">
    <citation type="journal article" date="2002" name="Nature">
        <title>The genome sequence and structure of rice chromosome 1.</title>
        <authorList>
            <person name="Sasaki T."/>
            <person name="Matsumoto T."/>
            <person name="Yamamoto K."/>
            <person name="Sakata K."/>
            <person name="Baba T."/>
            <person name="Katayose Y."/>
            <person name="Wu J."/>
            <person name="Niimura Y."/>
            <person name="Cheng Z."/>
            <person name="Nagamura Y."/>
            <person name="Antonio B.A."/>
            <person name="Kanamori H."/>
            <person name="Hosokawa S."/>
            <person name="Masukawa M."/>
            <person name="Arikawa K."/>
            <person name="Chiden Y."/>
            <person name="Hayashi M."/>
            <person name="Okamoto M."/>
            <person name="Ando T."/>
            <person name="Aoki H."/>
            <person name="Arita K."/>
            <person name="Hamada M."/>
            <person name="Harada C."/>
            <person name="Hijishita S."/>
            <person name="Honda M."/>
            <person name="Ichikawa Y."/>
            <person name="Idonuma A."/>
            <person name="Iijima M."/>
            <person name="Ikeda M."/>
            <person name="Ikeno M."/>
            <person name="Ito S."/>
            <person name="Ito T."/>
            <person name="Ito Y."/>
            <person name="Ito Y."/>
            <person name="Iwabuchi A."/>
            <person name="Kamiya K."/>
            <person name="Karasawa W."/>
            <person name="Katagiri S."/>
            <person name="Kikuta A."/>
            <person name="Kobayashi N."/>
            <person name="Kono I."/>
            <person name="Machita K."/>
            <person name="Maehara T."/>
            <person name="Mizuno H."/>
            <person name="Mizubayashi T."/>
            <person name="Mukai Y."/>
            <person name="Nagasaki H."/>
            <person name="Nakashima M."/>
            <person name="Nakama Y."/>
            <person name="Nakamichi Y."/>
            <person name="Nakamura M."/>
            <person name="Namiki N."/>
            <person name="Negishi M."/>
            <person name="Ohta I."/>
            <person name="Ono N."/>
            <person name="Saji S."/>
            <person name="Sakai K."/>
            <person name="Shibata M."/>
            <person name="Shimokawa T."/>
            <person name="Shomura A."/>
            <person name="Song J."/>
            <person name="Takazaki Y."/>
            <person name="Terasawa K."/>
            <person name="Tsuji K."/>
            <person name="Waki K."/>
            <person name="Yamagata H."/>
            <person name="Yamane H."/>
            <person name="Yoshiki S."/>
            <person name="Yoshihara R."/>
            <person name="Yukawa K."/>
            <person name="Zhong H."/>
            <person name="Iwama H."/>
            <person name="Endo T."/>
            <person name="Ito H."/>
            <person name="Hahn J.H."/>
            <person name="Kim H.-I."/>
            <person name="Eun M.-Y."/>
            <person name="Yano M."/>
            <person name="Jiang J."/>
            <person name="Gojobori T."/>
        </authorList>
    </citation>
    <scope>NUCLEOTIDE SEQUENCE [LARGE SCALE GENOMIC DNA]</scope>
    <source>
        <strain>cv. Nipponbare</strain>
    </source>
</reference>
<reference key="3">
    <citation type="journal article" date="2005" name="Nature">
        <title>The map-based sequence of the rice genome.</title>
        <authorList>
            <consortium name="International rice genome sequencing project (IRGSP)"/>
        </authorList>
    </citation>
    <scope>NUCLEOTIDE SEQUENCE [LARGE SCALE GENOMIC DNA]</scope>
    <source>
        <strain>cv. Nipponbare</strain>
    </source>
</reference>
<reference key="4">
    <citation type="journal article" date="2008" name="Nucleic Acids Res.">
        <title>The rice annotation project database (RAP-DB): 2008 update.</title>
        <authorList>
            <consortium name="The rice annotation project (RAP)"/>
        </authorList>
    </citation>
    <scope>GENOME REANNOTATION</scope>
    <source>
        <strain>cv. Nipponbare</strain>
    </source>
</reference>
<reference key="5">
    <citation type="journal article" date="2013" name="Rice">
        <title>Improvement of the Oryza sativa Nipponbare reference genome using next generation sequence and optical map data.</title>
        <authorList>
            <person name="Kawahara Y."/>
            <person name="de la Bastide M."/>
            <person name="Hamilton J.P."/>
            <person name="Kanamori H."/>
            <person name="McCombie W.R."/>
            <person name="Ouyang S."/>
            <person name="Schwartz D.C."/>
            <person name="Tanaka T."/>
            <person name="Wu J."/>
            <person name="Zhou S."/>
            <person name="Childs K.L."/>
            <person name="Davidson R.M."/>
            <person name="Lin H."/>
            <person name="Quesada-Ocampo L."/>
            <person name="Vaillancourt B."/>
            <person name="Sakai H."/>
            <person name="Lee S.S."/>
            <person name="Kim J."/>
            <person name="Numa H."/>
            <person name="Itoh T."/>
            <person name="Buell C.R."/>
            <person name="Matsumoto T."/>
        </authorList>
    </citation>
    <scope>GENOME REANNOTATION</scope>
    <source>
        <strain>cv. Nipponbare</strain>
    </source>
</reference>
<reference key="6">
    <citation type="journal article" date="2003" name="Science">
        <title>Collection, mapping, and annotation of over 28,000 cDNA clones from japonica rice.</title>
        <authorList>
            <consortium name="The rice full-length cDNA consortium"/>
        </authorList>
    </citation>
    <scope>NUCLEOTIDE SEQUENCE [LARGE SCALE MRNA] OF 431-861</scope>
    <source>
        <strain>cv. Nipponbare</strain>
    </source>
</reference>
<reference key="7">
    <citation type="journal article" date="2008" name="Plant Mol. Biol.">
        <title>A genome-wide survey of HD-Zip genes in rice and analysis of drought-responsive family members.</title>
        <authorList>
            <person name="Agalou A."/>
            <person name="Purwantomo S."/>
            <person name="Oevernaes E."/>
            <person name="Johannesson H."/>
            <person name="Zhu X."/>
            <person name="Estiati A."/>
            <person name="de Kam R.J."/>
            <person name="Engstroem P."/>
            <person name="Slamet-Loedin I.H."/>
            <person name="Zhu Z."/>
            <person name="Wang M."/>
            <person name="Xiong L."/>
            <person name="Meijer A.H."/>
            <person name="Ouwerkerk P.B.F."/>
        </authorList>
    </citation>
    <scope>NUCLEOTIDE SEQUENCE [MRNA] OF 468-560</scope>
    <scope>TISSUE SPECIFICITY</scope>
    <scope>GENE FAMILY</scope>
    <scope>NOMENCLATURE</scope>
    <source>
        <strain>cv. Nipponbare</strain>
    </source>
</reference>
<comment type="function">
    <text evidence="6">Probable transcription factor that may be necessary for the proper patterning of vascular bundles.</text>
</comment>
<comment type="subcellular location">
    <subcellularLocation>
        <location evidence="7">Nucleus</location>
    </subcellularLocation>
</comment>
<comment type="tissue specificity">
    <text evidence="5 6">Expressed in phloem.</text>
</comment>
<comment type="similarity">
    <text evidence="7">Belongs to the HD-ZIP homeobox family. Class III subfamily.</text>
</comment>
<comment type="sequence caution" evidence="7">
    <conflict type="erroneous gene model prediction">
        <sequence resource="EMBL-CDS" id="BAD73204"/>
    </conflict>
</comment>
<comment type="sequence caution" evidence="7">
    <conflict type="erroneous gene model prediction">
        <sequence resource="EMBL-CDS" id="BAF04229"/>
    </conflict>
</comment>
<keyword id="KW-0175">Coiled coil</keyword>
<keyword id="KW-0238">DNA-binding</keyword>
<keyword id="KW-0371">Homeobox</keyword>
<keyword id="KW-0539">Nucleus</keyword>
<keyword id="KW-1185">Reference proteome</keyword>
<keyword id="KW-0804">Transcription</keyword>
<keyword id="KW-0805">Transcription regulation</keyword>
<organism>
    <name type="scientific">Oryza sativa subsp. japonica</name>
    <name type="common">Rice</name>
    <dbReference type="NCBI Taxonomy" id="39947"/>
    <lineage>
        <taxon>Eukaryota</taxon>
        <taxon>Viridiplantae</taxon>
        <taxon>Streptophyta</taxon>
        <taxon>Embryophyta</taxon>
        <taxon>Tracheophyta</taxon>
        <taxon>Spermatophyta</taxon>
        <taxon>Magnoliopsida</taxon>
        <taxon>Liliopsida</taxon>
        <taxon>Poales</taxon>
        <taxon>Poaceae</taxon>
        <taxon>BOP clade</taxon>
        <taxon>Oryzoideae</taxon>
        <taxon>Oryzeae</taxon>
        <taxon>Oryzinae</taxon>
        <taxon>Oryza</taxon>
        <taxon>Oryza sativa</taxon>
    </lineage>
</organism>
<evidence type="ECO:0000255" key="1"/>
<evidence type="ECO:0000255" key="2">
    <source>
        <dbReference type="PROSITE-ProRule" id="PRU00108"/>
    </source>
</evidence>
<evidence type="ECO:0000255" key="3">
    <source>
        <dbReference type="PROSITE-ProRule" id="PRU00197"/>
    </source>
</evidence>
<evidence type="ECO:0000256" key="4">
    <source>
        <dbReference type="SAM" id="MobiDB-lite"/>
    </source>
</evidence>
<evidence type="ECO:0000269" key="5">
    <source>
    </source>
</evidence>
<evidence type="ECO:0000269" key="6">
    <source>
    </source>
</evidence>
<evidence type="ECO:0000305" key="7"/>
<protein>
    <recommendedName>
        <fullName>Homeobox-leucine zipper protein HOX29</fullName>
    </recommendedName>
    <alternativeName>
        <fullName>HD-ZIP protein HOX29</fullName>
    </alternativeName>
    <alternativeName>
        <fullName>Homeodomain transcription factor HOX29</fullName>
    </alternativeName>
    <alternativeName>
        <fullName>OSHB5</fullName>
    </alternativeName>
    <alternativeName>
        <fullName>OsHox29</fullName>
    </alternativeName>
</protein>